<comment type="function">
    <text evidence="1">Forms with the serine/threonine protein phosphatase CTDNEP1 an active complex which dephosphorylates and may activate LPIN1 and LPIN2. LPIN1 and LPIN2 are phosphatidate phosphatases that catalyze the conversion of phosphatidic acid to diacylglycerol and control the metabolism of fatty acids at different levels. May indirectly modulate the lipid composition of nuclear and/or endoplasmic reticulum membranes and be required for proper nuclear membrane morphology and/or dynamics. May also indirectly regulate the production of lipid droplets and triacylglycerol (By similarity).</text>
</comment>
<comment type="subunit">
    <text evidence="1">Interacts with CTDNEP1; the complex dephosphorylates LPIN1 and LPIN2.</text>
</comment>
<comment type="subcellular location">
    <subcellularLocation>
        <location evidence="1">Nucleus membrane</location>
        <topology evidence="1">Multi-pass membrane protein</topology>
    </subcellularLocation>
    <subcellularLocation>
        <location evidence="1">Cytoplasm</location>
    </subcellularLocation>
    <text evidence="1">Filamentous pattern in the cytoplasm.</text>
</comment>
<comment type="similarity">
    <text evidence="4">Belongs to the CNEP1R1 family.</text>
</comment>
<reference key="1">
    <citation type="submission" date="2005-08" db="EMBL/GenBank/DDBJ databases">
        <authorList>
            <consortium name="NIH - Mammalian Gene Collection (MGC) project"/>
        </authorList>
    </citation>
    <scope>NUCLEOTIDE SEQUENCE [LARGE SCALE MRNA]</scope>
    <source>
        <strain>Hereford</strain>
        <tissue>Heart ventricle</tissue>
    </source>
</reference>
<organism>
    <name type="scientific">Bos taurus</name>
    <name type="common">Bovine</name>
    <dbReference type="NCBI Taxonomy" id="9913"/>
    <lineage>
        <taxon>Eukaryota</taxon>
        <taxon>Metazoa</taxon>
        <taxon>Chordata</taxon>
        <taxon>Craniata</taxon>
        <taxon>Vertebrata</taxon>
        <taxon>Euteleostomi</taxon>
        <taxon>Mammalia</taxon>
        <taxon>Eutheria</taxon>
        <taxon>Laurasiatheria</taxon>
        <taxon>Artiodactyla</taxon>
        <taxon>Ruminantia</taxon>
        <taxon>Pecora</taxon>
        <taxon>Bovidae</taxon>
        <taxon>Bovinae</taxon>
        <taxon>Bos</taxon>
    </lineage>
</organism>
<protein>
    <recommendedName>
        <fullName>Nuclear envelope phosphatase-regulatory subunit 1</fullName>
    </recommendedName>
    <alternativeName>
        <fullName>Transmembrane protein 188</fullName>
    </alternativeName>
</protein>
<keyword id="KW-0007">Acetylation</keyword>
<keyword id="KW-0963">Cytoplasm</keyword>
<keyword id="KW-0443">Lipid metabolism</keyword>
<keyword id="KW-0472">Membrane</keyword>
<keyword id="KW-0539">Nucleus</keyword>
<keyword id="KW-1185">Reference proteome</keyword>
<keyword id="KW-0812">Transmembrane</keyword>
<keyword id="KW-1133">Transmembrane helix</keyword>
<accession>Q3ZBP2</accession>
<evidence type="ECO:0000250" key="1"/>
<evidence type="ECO:0000250" key="2">
    <source>
        <dbReference type="UniProtKB" id="Q8N9A8"/>
    </source>
</evidence>
<evidence type="ECO:0000255" key="3"/>
<evidence type="ECO:0000305" key="4"/>
<dbReference type="EMBL" id="BC103188">
    <property type="protein sequence ID" value="AAI03189.1"/>
    <property type="molecule type" value="mRNA"/>
</dbReference>
<dbReference type="RefSeq" id="NP_001029475.1">
    <property type="nucleotide sequence ID" value="NM_001034303.2"/>
</dbReference>
<dbReference type="SMR" id="Q3ZBP2"/>
<dbReference type="FunCoup" id="Q3ZBP2">
    <property type="interactions" value="2707"/>
</dbReference>
<dbReference type="STRING" id="9913.ENSBTAP00000044208"/>
<dbReference type="PaxDb" id="9913-ENSBTAP00000044208"/>
<dbReference type="Ensembl" id="ENSBTAT00000046962.3">
    <property type="protein sequence ID" value="ENSBTAP00000044208.1"/>
    <property type="gene ID" value="ENSBTAG00000033078.3"/>
</dbReference>
<dbReference type="GeneID" id="507593"/>
<dbReference type="KEGG" id="bta:507593"/>
<dbReference type="CTD" id="255919"/>
<dbReference type="VEuPathDB" id="HostDB:ENSBTAG00000033078"/>
<dbReference type="VGNC" id="VGNC:27495">
    <property type="gene designation" value="CNEP1R1"/>
</dbReference>
<dbReference type="eggNOG" id="KOG4606">
    <property type="taxonomic scope" value="Eukaryota"/>
</dbReference>
<dbReference type="GeneTree" id="ENSGT00390000008576"/>
<dbReference type="HOGENOM" id="CLU_138149_1_0_1"/>
<dbReference type="InParanoid" id="Q3ZBP2"/>
<dbReference type="OMA" id="NHPFFAI"/>
<dbReference type="OrthoDB" id="5786980at2759"/>
<dbReference type="TreeFam" id="TF313179"/>
<dbReference type="Reactome" id="R-BTA-4419969">
    <property type="pathway name" value="Depolymerization of the Nuclear Lamina"/>
</dbReference>
<dbReference type="Proteomes" id="UP000009136">
    <property type="component" value="Chromosome 18"/>
</dbReference>
<dbReference type="Bgee" id="ENSBTAG00000033078">
    <property type="expression patterns" value="Expressed in oocyte and 104 other cell types or tissues"/>
</dbReference>
<dbReference type="GO" id="GO:0005737">
    <property type="term" value="C:cytoplasm"/>
    <property type="evidence" value="ECO:0000250"/>
    <property type="project" value="UniProtKB"/>
</dbReference>
<dbReference type="GO" id="GO:0005829">
    <property type="term" value="C:cytosol"/>
    <property type="evidence" value="ECO:0007669"/>
    <property type="project" value="Ensembl"/>
</dbReference>
<dbReference type="GO" id="GO:0071595">
    <property type="term" value="C:Nem1-Spo7 phosphatase complex"/>
    <property type="evidence" value="ECO:0000250"/>
    <property type="project" value="UniProtKB"/>
</dbReference>
<dbReference type="GO" id="GO:0031965">
    <property type="term" value="C:nuclear membrane"/>
    <property type="evidence" value="ECO:0000250"/>
    <property type="project" value="UniProtKB"/>
</dbReference>
<dbReference type="GO" id="GO:0019888">
    <property type="term" value="F:protein phosphatase regulator activity"/>
    <property type="evidence" value="ECO:0000250"/>
    <property type="project" value="UniProtKB"/>
</dbReference>
<dbReference type="GO" id="GO:0006629">
    <property type="term" value="P:lipid metabolic process"/>
    <property type="evidence" value="ECO:0007669"/>
    <property type="project" value="UniProtKB-KW"/>
</dbReference>
<dbReference type="GO" id="GO:0010867">
    <property type="term" value="P:positive regulation of triglyceride biosynthetic process"/>
    <property type="evidence" value="ECO:0000250"/>
    <property type="project" value="UniProtKB"/>
</dbReference>
<dbReference type="GO" id="GO:0034504">
    <property type="term" value="P:protein localization to nucleus"/>
    <property type="evidence" value="ECO:0000250"/>
    <property type="project" value="UniProtKB"/>
</dbReference>
<dbReference type="InterPro" id="IPR019168">
    <property type="entry name" value="NEP1-R1"/>
</dbReference>
<dbReference type="PANTHER" id="PTHR20996">
    <property type="entry name" value="NUCLEAR ENVELOPE PHOSPHATASE-REGULATORY SUBUNIT 1"/>
    <property type="match status" value="1"/>
</dbReference>
<dbReference type="PANTHER" id="PTHR20996:SF1">
    <property type="entry name" value="NUCLEAR ENVELOPE PHOSPHATASE-REGULATORY SUBUNIT 1"/>
    <property type="match status" value="1"/>
</dbReference>
<dbReference type="Pfam" id="PF09771">
    <property type="entry name" value="Tmemb_18A"/>
    <property type="match status" value="1"/>
</dbReference>
<gene>
    <name type="primary">CNEP1R1</name>
    <name type="synonym">TMEM188</name>
</gene>
<proteinExistence type="evidence at transcript level"/>
<sequence length="125" mass="14267">MNSLEQAEDLKAFERRLTEYIHCLQPATGRWRMLLIVVSVCTATGAWNWLIDPETQKVSFFTSLWNHPFFTISCITLIGLFFAGIHKRVVAPSIIAARCRTVLAEYNMSCDDTGKLILKPRPHVQ</sequence>
<name>NEPR1_BOVIN</name>
<feature type="chain" id="PRO_0000286614" description="Nuclear envelope phosphatase-regulatory subunit 1">
    <location>
        <begin position="1"/>
        <end position="125"/>
    </location>
</feature>
<feature type="transmembrane region" description="Helical" evidence="3">
    <location>
        <begin position="33"/>
        <end position="53"/>
    </location>
</feature>
<feature type="transmembrane region" description="Helical" evidence="3">
    <location>
        <begin position="65"/>
        <end position="85"/>
    </location>
</feature>
<feature type="modified residue" description="N-acetylmethionine" evidence="2">
    <location>
        <position position="1"/>
    </location>
</feature>